<evidence type="ECO:0000250" key="1"/>
<evidence type="ECO:0000250" key="2">
    <source>
        <dbReference type="UniProtKB" id="O60658"/>
    </source>
</evidence>
<evidence type="ECO:0000250" key="3">
    <source>
        <dbReference type="UniProtKB" id="O76083"/>
    </source>
</evidence>
<evidence type="ECO:0000255" key="4">
    <source>
        <dbReference type="PROSITE-ProRule" id="PRU00140"/>
    </source>
</evidence>
<evidence type="ECO:0000255" key="5">
    <source>
        <dbReference type="PROSITE-ProRule" id="PRU01192"/>
    </source>
</evidence>
<evidence type="ECO:0000256" key="6">
    <source>
        <dbReference type="SAM" id="MobiDB-lite"/>
    </source>
</evidence>
<evidence type="ECO:0000269" key="7">
    <source>
    </source>
</evidence>
<evidence type="ECO:0000269" key="8">
    <source>
    </source>
</evidence>
<evidence type="ECO:0000305" key="9"/>
<evidence type="ECO:0007744" key="10">
    <source>
    </source>
</evidence>
<evidence type="ECO:0007744" key="11">
    <source>
    </source>
</evidence>
<keyword id="KW-0114">cAMP</keyword>
<keyword id="KW-0378">Hydrolase</keyword>
<keyword id="KW-0479">Metal-binding</keyword>
<keyword id="KW-0597">Phosphoprotein</keyword>
<keyword id="KW-1185">Reference proteome</keyword>
<name>PDE8A_MOUSE</name>
<sequence length="823" mass="93171">MGCAPSIHTSENRTFSHSDGEDEDVDVDVPGPAPRSIQRWSTAPGLVEPQPRDNGASKVSVADVQFGPMRFHQDQLQVLLVFTKEDSQCNGFHRACEKAGFKCTVTKEVQTVLTCFQDKLHDIIIIDHRYPRQMDAETLCRSIRSSKFSENTVIVGVVRRVDKEESSLMPFLAAGFTRRFIENPNVMACYNELLQLACGEVRSQLKLRACNSVFTALEKSQEAIEITSEDHIIQYANPAFESTMGYQSGELIGKELAQVPINEKKGDLLDAINSCVTVDKEWQGVYHTQKKNGDNIQQNVKIIPVIGQGGKIRHYVSIIRVCNGNNKVETTTECVQTDSQTDNQAGKHKDRRKHSMDAKAVSSRTSDVSSQRRHSSLARIHSMMIEAPITKVINIINAAQENSPVPVTEALNRVLDILRTTELYSPQFNAQDDPHATDLVGGLMSDGLRRFSGNEYILATKNLPPLSNNLATPVSLHDVPPRIALAIENEEQWDFDIFELEVATQNRPLIYLGLKTFARFGMCEFLQCSETTLRSWFQMIESNYHSSNPYHNSTHAADVLHATAYFLSRDKIKETLDRIDEVAALIAATVHDVDHPGRTNSFLCNAGNQLAVLYNDTAVLESHHVALAFQLTLENDQCNIFKQMERNDYRTLRQSIIDMVLATEMTKHFEHVNKFINSINKPLTAQESEEPDRSLEDIKAMLKTPESRALIKRMMIKCADVSNPCRPLEHCIEWAARISEEYFSQTDEEKQLDLPVVMPVFDRNTCSIPKSQISFIDYFITDMFDAWDAFVDLPNLMQHLDDNFRYWKGLDEKKLRSLRPPPE</sequence>
<dbReference type="EC" id="3.1.4.53" evidence="8"/>
<dbReference type="EMBL" id="AF067806">
    <property type="protein sequence ID" value="AAC40194.1"/>
    <property type="molecule type" value="mRNA"/>
</dbReference>
<dbReference type="EMBL" id="BC125578">
    <property type="protein sequence ID" value="AAI25579.1"/>
    <property type="molecule type" value="mRNA"/>
</dbReference>
<dbReference type="EMBL" id="BC132145">
    <property type="protein sequence ID" value="AAI32146.1"/>
    <property type="molecule type" value="mRNA"/>
</dbReference>
<dbReference type="CCDS" id="CCDS40005.1"/>
<dbReference type="RefSeq" id="NP_032829.1">
    <property type="nucleotide sequence ID" value="NM_008803.3"/>
</dbReference>
<dbReference type="SMR" id="O88502"/>
<dbReference type="BioGRID" id="202082">
    <property type="interactions" value="12"/>
</dbReference>
<dbReference type="CORUM" id="O88502"/>
<dbReference type="FunCoup" id="O88502">
    <property type="interactions" value="806"/>
</dbReference>
<dbReference type="STRING" id="10090.ENSMUSP00000026672"/>
<dbReference type="GlyGen" id="O88502">
    <property type="glycosylation" value="1 site, 1 N-linked glycan (1 site)"/>
</dbReference>
<dbReference type="iPTMnet" id="O88502"/>
<dbReference type="PhosphoSitePlus" id="O88502"/>
<dbReference type="jPOST" id="O88502"/>
<dbReference type="PaxDb" id="10090-ENSMUSP00000026672"/>
<dbReference type="PeptideAtlas" id="O88502"/>
<dbReference type="ProteomicsDB" id="294042"/>
<dbReference type="Antibodypedia" id="679">
    <property type="antibodies" value="289 antibodies from 31 providers"/>
</dbReference>
<dbReference type="DNASU" id="18584"/>
<dbReference type="Ensembl" id="ENSMUST00000026672.8">
    <property type="protein sequence ID" value="ENSMUSP00000026672.8"/>
    <property type="gene ID" value="ENSMUSG00000025584.18"/>
</dbReference>
<dbReference type="GeneID" id="18584"/>
<dbReference type="KEGG" id="mmu:18584"/>
<dbReference type="UCSC" id="uc009ibt.1">
    <property type="organism name" value="mouse"/>
</dbReference>
<dbReference type="AGR" id="MGI:1277116"/>
<dbReference type="CTD" id="5151"/>
<dbReference type="MGI" id="MGI:1277116">
    <property type="gene designation" value="Pde8a"/>
</dbReference>
<dbReference type="VEuPathDB" id="HostDB:ENSMUSG00000025584"/>
<dbReference type="eggNOG" id="KOG1229">
    <property type="taxonomic scope" value="Eukaryota"/>
</dbReference>
<dbReference type="GeneTree" id="ENSGT00940000156422"/>
<dbReference type="HOGENOM" id="CLU_005940_4_2_1"/>
<dbReference type="InParanoid" id="O88502"/>
<dbReference type="OMA" id="NSCIKFE"/>
<dbReference type="OrthoDB" id="189220at2759"/>
<dbReference type="PhylomeDB" id="O88502"/>
<dbReference type="TreeFam" id="TF314638"/>
<dbReference type="BRENDA" id="3.1.4.53">
    <property type="organism ID" value="3474"/>
</dbReference>
<dbReference type="Reactome" id="R-MMU-418555">
    <property type="pathway name" value="G alpha (s) signalling events"/>
</dbReference>
<dbReference type="UniPathway" id="UPA00762">
    <property type="reaction ID" value="UER00747"/>
</dbReference>
<dbReference type="BioGRID-ORCS" id="18584">
    <property type="hits" value="1 hit in 77 CRISPR screens"/>
</dbReference>
<dbReference type="ChiTaRS" id="Pde8a">
    <property type="organism name" value="mouse"/>
</dbReference>
<dbReference type="PRO" id="PR:O88502"/>
<dbReference type="Proteomes" id="UP000000589">
    <property type="component" value="Chromosome 7"/>
</dbReference>
<dbReference type="RNAct" id="O88502">
    <property type="molecule type" value="protein"/>
</dbReference>
<dbReference type="Bgee" id="ENSMUSG00000025584">
    <property type="expression patterns" value="Expressed in seminiferous tubule of testis and 228 other cell types or tissues"/>
</dbReference>
<dbReference type="GO" id="GO:0004115">
    <property type="term" value="F:3',5'-cyclic-AMP phosphodiesterase activity"/>
    <property type="evidence" value="ECO:0000314"/>
    <property type="project" value="MGI"/>
</dbReference>
<dbReference type="GO" id="GO:0047555">
    <property type="term" value="F:3',5'-cyclic-GMP phosphodiesterase activity"/>
    <property type="evidence" value="ECO:0007669"/>
    <property type="project" value="Ensembl"/>
</dbReference>
<dbReference type="GO" id="GO:0019900">
    <property type="term" value="F:kinase binding"/>
    <property type="evidence" value="ECO:0007669"/>
    <property type="project" value="Ensembl"/>
</dbReference>
<dbReference type="GO" id="GO:0046872">
    <property type="term" value="F:metal ion binding"/>
    <property type="evidence" value="ECO:0007669"/>
    <property type="project" value="UniProtKB-KW"/>
</dbReference>
<dbReference type="GO" id="GO:0030295">
    <property type="term" value="F:protein kinase activator activity"/>
    <property type="evidence" value="ECO:0007669"/>
    <property type="project" value="Ensembl"/>
</dbReference>
<dbReference type="GO" id="GO:0006198">
    <property type="term" value="P:cAMP catabolic process"/>
    <property type="evidence" value="ECO:0007669"/>
    <property type="project" value="UniProtKB-UniPathway"/>
</dbReference>
<dbReference type="GO" id="GO:0071364">
    <property type="term" value="P:cellular response to epidermal growth factor stimulus"/>
    <property type="evidence" value="ECO:0000315"/>
    <property type="project" value="UniProtKB"/>
</dbReference>
<dbReference type="GO" id="GO:0070374">
    <property type="term" value="P:positive regulation of ERK1 and ERK2 cascade"/>
    <property type="evidence" value="ECO:0000315"/>
    <property type="project" value="UniProtKB"/>
</dbReference>
<dbReference type="GO" id="GO:0007165">
    <property type="term" value="P:signal transduction"/>
    <property type="evidence" value="ECO:0007669"/>
    <property type="project" value="InterPro"/>
</dbReference>
<dbReference type="CDD" id="cd00077">
    <property type="entry name" value="HDc"/>
    <property type="match status" value="1"/>
</dbReference>
<dbReference type="CDD" id="cd00130">
    <property type="entry name" value="PAS"/>
    <property type="match status" value="1"/>
</dbReference>
<dbReference type="FunFam" id="1.10.1300.10:FF:000002">
    <property type="entry name" value="Phosphodiesterase"/>
    <property type="match status" value="1"/>
</dbReference>
<dbReference type="FunFam" id="3.30.450.20:FF:000040">
    <property type="entry name" value="Phosphodiesterase"/>
    <property type="match status" value="1"/>
</dbReference>
<dbReference type="Gene3D" id="3.40.50.2300">
    <property type="match status" value="1"/>
</dbReference>
<dbReference type="Gene3D" id="1.10.1300.10">
    <property type="entry name" value="3'5'-cyclic nucleotide phosphodiesterase, catalytic domain"/>
    <property type="match status" value="1"/>
</dbReference>
<dbReference type="Gene3D" id="3.30.450.20">
    <property type="entry name" value="PAS domain"/>
    <property type="match status" value="1"/>
</dbReference>
<dbReference type="InterPro" id="IPR003607">
    <property type="entry name" value="HD/PDEase_dom"/>
</dbReference>
<dbReference type="InterPro" id="IPR000014">
    <property type="entry name" value="PAS"/>
</dbReference>
<dbReference type="InterPro" id="IPR035965">
    <property type="entry name" value="PAS-like_dom_sf"/>
</dbReference>
<dbReference type="InterPro" id="IPR023088">
    <property type="entry name" value="PDEase"/>
</dbReference>
<dbReference type="InterPro" id="IPR002073">
    <property type="entry name" value="PDEase_catalytic_dom"/>
</dbReference>
<dbReference type="InterPro" id="IPR036971">
    <property type="entry name" value="PDEase_catalytic_dom_sf"/>
</dbReference>
<dbReference type="InterPro" id="IPR023174">
    <property type="entry name" value="PDEase_CS"/>
</dbReference>
<dbReference type="NCBIfam" id="TIGR00229">
    <property type="entry name" value="sensory_box"/>
    <property type="match status" value="1"/>
</dbReference>
<dbReference type="PANTHER" id="PTHR11347">
    <property type="entry name" value="CYCLIC NUCLEOTIDE PHOSPHODIESTERASE"/>
    <property type="match status" value="1"/>
</dbReference>
<dbReference type="Pfam" id="PF13426">
    <property type="entry name" value="PAS_9"/>
    <property type="match status" value="1"/>
</dbReference>
<dbReference type="Pfam" id="PF23198">
    <property type="entry name" value="PDE8A_N"/>
    <property type="match status" value="1"/>
</dbReference>
<dbReference type="Pfam" id="PF00233">
    <property type="entry name" value="PDEase_I"/>
    <property type="match status" value="1"/>
</dbReference>
<dbReference type="PRINTS" id="PR00387">
    <property type="entry name" value="PDIESTERASE1"/>
</dbReference>
<dbReference type="SMART" id="SM00471">
    <property type="entry name" value="HDc"/>
    <property type="match status" value="1"/>
</dbReference>
<dbReference type="SUPFAM" id="SSF109604">
    <property type="entry name" value="HD-domain/PDEase-like"/>
    <property type="match status" value="1"/>
</dbReference>
<dbReference type="SUPFAM" id="SSF55785">
    <property type="entry name" value="PYP-like sensor domain (PAS domain)"/>
    <property type="match status" value="1"/>
</dbReference>
<dbReference type="PROSITE" id="PS50112">
    <property type="entry name" value="PAS"/>
    <property type="match status" value="1"/>
</dbReference>
<dbReference type="PROSITE" id="PS00126">
    <property type="entry name" value="PDEASE_I_1"/>
    <property type="match status" value="1"/>
</dbReference>
<dbReference type="PROSITE" id="PS51845">
    <property type="entry name" value="PDEASE_I_2"/>
    <property type="match status" value="1"/>
</dbReference>
<feature type="chain" id="PRO_0000198839" description="High affinity cAMP-specific and IBMX-insensitive 3',5'-cyclic phosphodiesterase 8A">
    <location>
        <begin position="1"/>
        <end position="823"/>
    </location>
</feature>
<feature type="domain" description="PAS" evidence="4">
    <location>
        <begin position="209"/>
        <end position="280"/>
    </location>
</feature>
<feature type="domain" description="PAC">
    <location>
        <begin position="283"/>
        <end position="325"/>
    </location>
</feature>
<feature type="domain" description="PDEase" evidence="5">
    <location>
        <begin position="475"/>
        <end position="814"/>
    </location>
</feature>
<feature type="region of interest" description="Disordered" evidence="6">
    <location>
        <begin position="1"/>
        <end position="55"/>
    </location>
</feature>
<feature type="region of interest" description="Disordered" evidence="6">
    <location>
        <begin position="338"/>
        <end position="373"/>
    </location>
</feature>
<feature type="compositionally biased region" description="Basic and acidic residues" evidence="6">
    <location>
        <begin position="10"/>
        <end position="19"/>
    </location>
</feature>
<feature type="active site" description="Proton donor" evidence="3">
    <location>
        <position position="551"/>
    </location>
</feature>
<feature type="binding site" evidence="2">
    <location>
        <position position="555"/>
    </location>
    <ligand>
        <name>a divalent metal cation</name>
        <dbReference type="ChEBI" id="CHEBI:60240"/>
        <label>1</label>
    </ligand>
</feature>
<feature type="binding site" evidence="2">
    <location>
        <position position="591"/>
    </location>
    <ligand>
        <name>a divalent metal cation</name>
        <dbReference type="ChEBI" id="CHEBI:60240"/>
        <label>1</label>
    </ligand>
</feature>
<feature type="binding site" evidence="2">
    <location>
        <position position="592"/>
    </location>
    <ligand>
        <name>a divalent metal cation</name>
        <dbReference type="ChEBI" id="CHEBI:60240"/>
        <label>1</label>
    </ligand>
</feature>
<feature type="binding site" evidence="2">
    <location>
        <position position="592"/>
    </location>
    <ligand>
        <name>a divalent metal cation</name>
        <dbReference type="ChEBI" id="CHEBI:60240"/>
        <label>2</label>
    </ligand>
</feature>
<feature type="binding site" evidence="2">
    <location>
        <position position="720"/>
    </location>
    <ligand>
        <name>a divalent metal cation</name>
        <dbReference type="ChEBI" id="CHEBI:60240"/>
        <label>1</label>
    </ligand>
</feature>
<feature type="modified residue" description="Phosphoserine; by PKA" evidence="2">
    <location>
        <position position="355"/>
    </location>
</feature>
<feature type="modified residue" description="Phosphoserine" evidence="11">
    <location>
        <position position="382"/>
    </location>
</feature>
<feature type="modified residue" description="Phosphoserine" evidence="11">
    <location>
        <position position="452"/>
    </location>
</feature>
<feature type="modified residue" description="Phosphotyrosine" evidence="10">
    <location>
        <position position="456"/>
    </location>
</feature>
<comment type="function">
    <text evidence="2">Hydrolyzes the second messenger cAMP, which is a key regulator of many important physiological processes. May be involved in maintaining basal levels of the cyclic nucleotide and/or in the cAMP regulation of germ cell development. Binding to RAF1 reduces RAF1 'Ser-259' inhibitory-phosphorylation and stimulates RAF1-dependent EGF-activated ERK-signaling. Protects against cell death induced by hydrogen peroxide and staurosporine.</text>
</comment>
<comment type="catalytic activity">
    <reaction evidence="8">
        <text>3',5'-cyclic AMP + H2O = AMP + H(+)</text>
        <dbReference type="Rhea" id="RHEA:25277"/>
        <dbReference type="ChEBI" id="CHEBI:15377"/>
        <dbReference type="ChEBI" id="CHEBI:15378"/>
        <dbReference type="ChEBI" id="CHEBI:58165"/>
        <dbReference type="ChEBI" id="CHEBI:456215"/>
        <dbReference type="EC" id="3.1.4.53"/>
    </reaction>
    <physiologicalReaction direction="left-to-right" evidence="8">
        <dbReference type="Rhea" id="RHEA:25278"/>
    </physiologicalReaction>
</comment>
<comment type="cofactor">
    <cofactor evidence="1">
        <name>a divalent metal cation</name>
        <dbReference type="ChEBI" id="CHEBI:60240"/>
    </cofactor>
    <text evidence="1">Binds 2 divalent metal cations per subunit. Site 1 may preferentially bind zinc ions, while site 2 has a preference for magnesium and/or manganese ions.</text>
</comment>
<comment type="activity regulation">
    <text>Inhibited by dipyridimole. Insensitive to selective PDE inhibitor rolipram and to the non-selective inhibitor, IBMX.</text>
</comment>
<comment type="biophysicochemical properties">
    <kinetics>
        <KM evidence="8">0.15 uM for cAMP</KM>
    </kinetics>
</comment>
<comment type="pathway">
    <text>Purine metabolism; 3',5'-cyclic AMP degradation; AMP from 3',5'-cyclic AMP: step 1/1.</text>
</comment>
<comment type="subunit">
    <text evidence="2">Interacts with RAF1. The interaction promotes RAF1 activity.</text>
</comment>
<comment type="tissue specificity">
    <text evidence="8">Expressed in multiple tissues, with highest levels in testis, followed by liver, heart, skeletal muscle, and kidney. In the testis, expressed specifically in the seminiferous tubules, in postmitotic pachytene spermatocytes (PubMed:9671792). Low expression, if any, in lung, smooth muscle, pancreas, thyroid, thymus, submaxillary gland, spleen, prostate, epididymus, uterus (PubMed:9671792).</text>
</comment>
<comment type="developmental stage">
    <text evidence="8">Expressed in embryos at 7 dpc. Not detected at later stages, including 11, 15 and 17 dpc (PubMed:9671792). In the testis, expression restricted to middle and late pachytene spermatocytes (PubMed:9671792).</text>
</comment>
<comment type="domain">
    <text>Composed of a C-terminal catalytic domain containing two putative divalent metal sites and an N-terminal regulatory domain.</text>
</comment>
<comment type="PTM">
    <text evidence="1">Phosphorylated at Ser-355 by PKA under elevated cAMP conditions, this enhances catalytic activity.</text>
</comment>
<comment type="disruption phenotype">
    <text evidence="7">Reduced phosphorylation of Mapk1/Erk2 and Mapk3/Erk1, both basal levels and those induced by EGF treatment.</text>
</comment>
<comment type="similarity">
    <text evidence="9">Belongs to the cyclic nucleotide phosphodiesterase family. PDE8 subfamily.</text>
</comment>
<protein>
    <recommendedName>
        <fullName>High affinity cAMP-specific and IBMX-insensitive 3',5'-cyclic phosphodiesterase 8A</fullName>
        <shortName>MmPDE8</shortName>
        <ecNumber evidence="8">3.1.4.53</ecNumber>
    </recommendedName>
</protein>
<proteinExistence type="evidence at protein level"/>
<gene>
    <name type="primary">Pde8a</name>
    <name type="synonym">Pde8</name>
</gene>
<reference key="1">
    <citation type="journal article" date="1998" name="Proc. Natl. Acad. Sci. U.S.A.">
        <title>Cloning and characterization of a cAMP-specific cyclic nucleotide phosphodiesterase.</title>
        <authorList>
            <person name="Soderling S.H."/>
            <person name="Bayuga S.J."/>
            <person name="Beavo J.A."/>
        </authorList>
    </citation>
    <scope>NUCLEOTIDE SEQUENCE [MRNA]</scope>
    <scope>CATALYTIC ACTIVITY</scope>
    <scope>BIOPHYSICOCHEMICAL PROPERTIES</scope>
    <scope>TISSUE SPECIFICITY</scope>
    <scope>DEVELOPMENTAL STAGE</scope>
    <source>
        <tissue>Testis</tissue>
    </source>
</reference>
<reference key="2">
    <citation type="journal article" date="2004" name="Genome Res.">
        <title>The status, quality, and expansion of the NIH full-length cDNA project: the Mammalian Gene Collection (MGC).</title>
        <authorList>
            <consortium name="The MGC Project Team"/>
        </authorList>
    </citation>
    <scope>NUCLEOTIDE SEQUENCE [LARGE SCALE MRNA]</scope>
    <source>
        <tissue>Brain</tissue>
    </source>
</reference>
<reference key="3">
    <citation type="journal article" date="2009" name="Immunity">
        <title>The phagosomal proteome in interferon-gamma-activated macrophages.</title>
        <authorList>
            <person name="Trost M."/>
            <person name="English L."/>
            <person name="Lemieux S."/>
            <person name="Courcelles M."/>
            <person name="Desjardins M."/>
            <person name="Thibault P."/>
        </authorList>
    </citation>
    <scope>PHOSPHORYLATION [LARGE SCALE ANALYSIS] AT TYR-456</scope>
    <scope>IDENTIFICATION BY MASS SPECTROMETRY [LARGE SCALE ANALYSIS]</scope>
</reference>
<reference key="4">
    <citation type="journal article" date="2010" name="Cell">
        <title>A tissue-specific atlas of mouse protein phosphorylation and expression.</title>
        <authorList>
            <person name="Huttlin E.L."/>
            <person name="Jedrychowski M.P."/>
            <person name="Elias J.E."/>
            <person name="Goswami T."/>
            <person name="Rad R."/>
            <person name="Beausoleil S.A."/>
            <person name="Villen J."/>
            <person name="Haas W."/>
            <person name="Sowa M.E."/>
            <person name="Gygi S.P."/>
        </authorList>
    </citation>
    <scope>PHOSPHORYLATION [LARGE SCALE ANALYSIS] AT SER-382 AND SER-452</scope>
    <scope>IDENTIFICATION BY MASS SPECTROMETRY [LARGE SCALE ANALYSIS]</scope>
    <source>
        <tissue>Brain</tissue>
        <tissue>Brown adipose tissue</tissue>
        <tissue>Heart</tissue>
        <tissue>Kidney</tissue>
        <tissue>Lung</tissue>
        <tissue>Spleen</tissue>
        <tissue>Testis</tissue>
    </source>
</reference>
<reference key="5">
    <citation type="journal article" date="2013" name="Proc. Natl. Acad. Sci. U.S.A.">
        <title>Phosphodiesterase-8A binds to and regulates Raf-1 kinase.</title>
        <authorList>
            <person name="Brown K.M."/>
            <person name="Day J.P."/>
            <person name="Huston E."/>
            <person name="Zimmermann B."/>
            <person name="Hampel K."/>
            <person name="Christian F."/>
            <person name="Romano D."/>
            <person name="Terhzaz S."/>
            <person name="Lee L.C."/>
            <person name="Willis M.J."/>
            <person name="Morton D.B."/>
            <person name="Beavo J.A."/>
            <person name="Shimizu-Albergine M."/>
            <person name="Davies S.A."/>
            <person name="Kolch W."/>
            <person name="Houslay M.D."/>
            <person name="Baillie G.S."/>
        </authorList>
    </citation>
    <scope>DISRUPTION PHENOTYPE</scope>
</reference>
<organism>
    <name type="scientific">Mus musculus</name>
    <name type="common">Mouse</name>
    <dbReference type="NCBI Taxonomy" id="10090"/>
    <lineage>
        <taxon>Eukaryota</taxon>
        <taxon>Metazoa</taxon>
        <taxon>Chordata</taxon>
        <taxon>Craniata</taxon>
        <taxon>Vertebrata</taxon>
        <taxon>Euteleostomi</taxon>
        <taxon>Mammalia</taxon>
        <taxon>Eutheria</taxon>
        <taxon>Euarchontoglires</taxon>
        <taxon>Glires</taxon>
        <taxon>Rodentia</taxon>
        <taxon>Myomorpha</taxon>
        <taxon>Muroidea</taxon>
        <taxon>Muridae</taxon>
        <taxon>Murinae</taxon>
        <taxon>Mus</taxon>
        <taxon>Mus</taxon>
    </lineage>
</organism>
<accession>O88502</accession>
<accession>Q059P6</accession>